<name>DER_CALS8</name>
<comment type="function">
    <text evidence="1">GTPase that plays an essential role in the late steps of ribosome biogenesis.</text>
</comment>
<comment type="subunit">
    <text evidence="1">Associates with the 50S ribosomal subunit.</text>
</comment>
<comment type="similarity">
    <text evidence="1">Belongs to the TRAFAC class TrmE-Era-EngA-EngB-Septin-like GTPase superfamily. EngA (Der) GTPase family.</text>
</comment>
<protein>
    <recommendedName>
        <fullName evidence="1">GTPase Der</fullName>
    </recommendedName>
    <alternativeName>
        <fullName evidence="1">GTP-binding protein EngA</fullName>
    </alternativeName>
</protein>
<sequence length="439" mass="49370">MKPTVAIVGRPNVGKSTLFNRLIGERRAIVDDTPGITRDRIVGETEWRGITFNVIDTGGIEPYSEDIILKQMRRQAQFAIDMSDVIIFMVDGKTGLTDADREVANMLRVSKKPIVLAVNKIDNISEQPIIYEFYELGLSDPIPMSAEHGSGVGDVLDAVVSYFDKVGINEIEEDSIKVAIIGKPNTGKSSLVNYILGEERVIVSDIPGTTRDAIDSYVEFEGIPLTLIDTAGLRRKSKIYDNIERYSMLRTISAIERSDICVILLDGTEPVSEQDAKIAGYAYEAGKGCIIAVNKWDAVEKDEKTADEYKKQIEEKLSFLKFAPVLFISAKTGFRVKKLLETVLYVYGNYTRRITTGQINDVLAEATTIYQPPSDKGKQLKIYYMTQVGEKPPKMAIFVNDKDLFHFSYQRYIENYLRKTFDFTGVPIVFLIREKGEKD</sequence>
<evidence type="ECO:0000255" key="1">
    <source>
        <dbReference type="HAMAP-Rule" id="MF_00195"/>
    </source>
</evidence>
<accession>A4XHX9</accession>
<feature type="chain" id="PRO_1000011589" description="GTPase Der">
    <location>
        <begin position="1"/>
        <end position="439"/>
    </location>
</feature>
<feature type="domain" description="EngA-type G 1">
    <location>
        <begin position="3"/>
        <end position="167"/>
    </location>
</feature>
<feature type="domain" description="EngA-type G 2">
    <location>
        <begin position="176"/>
        <end position="351"/>
    </location>
</feature>
<feature type="domain" description="KH-like" evidence="1">
    <location>
        <begin position="352"/>
        <end position="436"/>
    </location>
</feature>
<feature type="binding site" evidence="1">
    <location>
        <begin position="9"/>
        <end position="16"/>
    </location>
    <ligand>
        <name>GTP</name>
        <dbReference type="ChEBI" id="CHEBI:37565"/>
        <label>1</label>
    </ligand>
</feature>
<feature type="binding site" evidence="1">
    <location>
        <begin position="56"/>
        <end position="60"/>
    </location>
    <ligand>
        <name>GTP</name>
        <dbReference type="ChEBI" id="CHEBI:37565"/>
        <label>1</label>
    </ligand>
</feature>
<feature type="binding site" evidence="1">
    <location>
        <begin position="119"/>
        <end position="122"/>
    </location>
    <ligand>
        <name>GTP</name>
        <dbReference type="ChEBI" id="CHEBI:37565"/>
        <label>1</label>
    </ligand>
</feature>
<feature type="binding site" evidence="1">
    <location>
        <begin position="182"/>
        <end position="189"/>
    </location>
    <ligand>
        <name>GTP</name>
        <dbReference type="ChEBI" id="CHEBI:37565"/>
        <label>2</label>
    </ligand>
</feature>
<feature type="binding site" evidence="1">
    <location>
        <begin position="229"/>
        <end position="233"/>
    </location>
    <ligand>
        <name>GTP</name>
        <dbReference type="ChEBI" id="CHEBI:37565"/>
        <label>2</label>
    </ligand>
</feature>
<feature type="binding site" evidence="1">
    <location>
        <begin position="294"/>
        <end position="297"/>
    </location>
    <ligand>
        <name>GTP</name>
        <dbReference type="ChEBI" id="CHEBI:37565"/>
        <label>2</label>
    </ligand>
</feature>
<gene>
    <name evidence="1" type="primary">der</name>
    <name type="synonym">engA</name>
    <name type="ordered locus">Csac_0900</name>
</gene>
<proteinExistence type="inferred from homology"/>
<organism>
    <name type="scientific">Caldicellulosiruptor saccharolyticus (strain ATCC 43494 / DSM 8903 / Tp8T 6331)</name>
    <dbReference type="NCBI Taxonomy" id="351627"/>
    <lineage>
        <taxon>Bacteria</taxon>
        <taxon>Bacillati</taxon>
        <taxon>Bacillota</taxon>
        <taxon>Bacillota incertae sedis</taxon>
        <taxon>Caldicellulosiruptorales</taxon>
        <taxon>Caldicellulosiruptoraceae</taxon>
        <taxon>Caldicellulosiruptor</taxon>
    </lineage>
</organism>
<keyword id="KW-0342">GTP-binding</keyword>
<keyword id="KW-0547">Nucleotide-binding</keyword>
<keyword id="KW-0677">Repeat</keyword>
<keyword id="KW-0690">Ribosome biogenesis</keyword>
<reference key="1">
    <citation type="submission" date="2007-04" db="EMBL/GenBank/DDBJ databases">
        <title>Genome sequence of the thermophilic hydrogen-producing bacterium Caldicellulosiruptor saccharolyticus DSM 8903.</title>
        <authorList>
            <person name="Copeland A."/>
            <person name="Lucas S."/>
            <person name="Lapidus A."/>
            <person name="Barry K."/>
            <person name="Detter J.C."/>
            <person name="Glavina del Rio T."/>
            <person name="Hammon N."/>
            <person name="Israni S."/>
            <person name="Dalin E."/>
            <person name="Tice H."/>
            <person name="Pitluck S."/>
            <person name="Kiss H."/>
            <person name="Brettin T."/>
            <person name="Bruce D."/>
            <person name="Han C."/>
            <person name="Schmutz J."/>
            <person name="Larimer F."/>
            <person name="Land M."/>
            <person name="Hauser L."/>
            <person name="Kyrpides N."/>
            <person name="Lykidis A."/>
            <person name="van de Werken H.J.G."/>
            <person name="Verhaart M.R.A."/>
            <person name="VanFossen A.L."/>
            <person name="Lewis D.L."/>
            <person name="Nichols J.D."/>
            <person name="Goorissen H.P."/>
            <person name="van Niel E.W.J."/>
            <person name="Stams F.J.M."/>
            <person name="Willquist K.U."/>
            <person name="Ward D.E."/>
            <person name="van der Oost J."/>
            <person name="Kelly R.M."/>
            <person name="Kengen S.M.W."/>
            <person name="Richardson P."/>
        </authorList>
    </citation>
    <scope>NUCLEOTIDE SEQUENCE [LARGE SCALE GENOMIC DNA]</scope>
    <source>
        <strain>ATCC 43494 / DSM 8903 / Tp8T 6331</strain>
    </source>
</reference>
<dbReference type="EMBL" id="CP000679">
    <property type="protein sequence ID" value="ABP66514.2"/>
    <property type="molecule type" value="Genomic_DNA"/>
</dbReference>
<dbReference type="SMR" id="A4XHX9"/>
<dbReference type="STRING" id="351627.Csac_0900"/>
<dbReference type="KEGG" id="csc:Csac_0900"/>
<dbReference type="eggNOG" id="COG1160">
    <property type="taxonomic scope" value="Bacteria"/>
</dbReference>
<dbReference type="HOGENOM" id="CLU_016077_6_2_9"/>
<dbReference type="OrthoDB" id="9805918at2"/>
<dbReference type="Proteomes" id="UP000000256">
    <property type="component" value="Chromosome"/>
</dbReference>
<dbReference type="GO" id="GO:0005525">
    <property type="term" value="F:GTP binding"/>
    <property type="evidence" value="ECO:0007669"/>
    <property type="project" value="UniProtKB-UniRule"/>
</dbReference>
<dbReference type="GO" id="GO:0043022">
    <property type="term" value="F:ribosome binding"/>
    <property type="evidence" value="ECO:0007669"/>
    <property type="project" value="TreeGrafter"/>
</dbReference>
<dbReference type="GO" id="GO:0042254">
    <property type="term" value="P:ribosome biogenesis"/>
    <property type="evidence" value="ECO:0007669"/>
    <property type="project" value="UniProtKB-KW"/>
</dbReference>
<dbReference type="CDD" id="cd01894">
    <property type="entry name" value="EngA1"/>
    <property type="match status" value="1"/>
</dbReference>
<dbReference type="CDD" id="cd01895">
    <property type="entry name" value="EngA2"/>
    <property type="match status" value="1"/>
</dbReference>
<dbReference type="FunFam" id="3.30.300.20:FF:000004">
    <property type="entry name" value="GTPase Der"/>
    <property type="match status" value="1"/>
</dbReference>
<dbReference type="FunFam" id="3.40.50.300:FF:000040">
    <property type="entry name" value="GTPase Der"/>
    <property type="match status" value="1"/>
</dbReference>
<dbReference type="FunFam" id="3.40.50.300:FF:000057">
    <property type="entry name" value="GTPase Der"/>
    <property type="match status" value="1"/>
</dbReference>
<dbReference type="Gene3D" id="3.30.300.20">
    <property type="match status" value="1"/>
</dbReference>
<dbReference type="Gene3D" id="3.40.50.300">
    <property type="entry name" value="P-loop containing nucleotide triphosphate hydrolases"/>
    <property type="match status" value="2"/>
</dbReference>
<dbReference type="HAMAP" id="MF_00195">
    <property type="entry name" value="GTPase_Der"/>
    <property type="match status" value="1"/>
</dbReference>
<dbReference type="InterPro" id="IPR031166">
    <property type="entry name" value="G_ENGA"/>
</dbReference>
<dbReference type="InterPro" id="IPR006073">
    <property type="entry name" value="GTP-bd"/>
</dbReference>
<dbReference type="InterPro" id="IPR016484">
    <property type="entry name" value="GTPase_Der"/>
</dbReference>
<dbReference type="InterPro" id="IPR032859">
    <property type="entry name" value="KH_dom-like"/>
</dbReference>
<dbReference type="InterPro" id="IPR015946">
    <property type="entry name" value="KH_dom-like_a/b"/>
</dbReference>
<dbReference type="InterPro" id="IPR027417">
    <property type="entry name" value="P-loop_NTPase"/>
</dbReference>
<dbReference type="InterPro" id="IPR005225">
    <property type="entry name" value="Small_GTP-bd"/>
</dbReference>
<dbReference type="NCBIfam" id="TIGR03594">
    <property type="entry name" value="GTPase_EngA"/>
    <property type="match status" value="1"/>
</dbReference>
<dbReference type="NCBIfam" id="TIGR00231">
    <property type="entry name" value="small_GTP"/>
    <property type="match status" value="2"/>
</dbReference>
<dbReference type="PANTHER" id="PTHR43834">
    <property type="entry name" value="GTPASE DER"/>
    <property type="match status" value="1"/>
</dbReference>
<dbReference type="PANTHER" id="PTHR43834:SF6">
    <property type="entry name" value="GTPASE DER"/>
    <property type="match status" value="1"/>
</dbReference>
<dbReference type="Pfam" id="PF14714">
    <property type="entry name" value="KH_dom-like"/>
    <property type="match status" value="1"/>
</dbReference>
<dbReference type="Pfam" id="PF01926">
    <property type="entry name" value="MMR_HSR1"/>
    <property type="match status" value="2"/>
</dbReference>
<dbReference type="PIRSF" id="PIRSF006485">
    <property type="entry name" value="GTP-binding_EngA"/>
    <property type="match status" value="1"/>
</dbReference>
<dbReference type="SUPFAM" id="SSF52540">
    <property type="entry name" value="P-loop containing nucleoside triphosphate hydrolases"/>
    <property type="match status" value="2"/>
</dbReference>
<dbReference type="PROSITE" id="PS51712">
    <property type="entry name" value="G_ENGA"/>
    <property type="match status" value="2"/>
</dbReference>